<feature type="chain" id="PRO_1000197267" description="Thymidylate synthase">
    <location>
        <begin position="1"/>
        <end position="283"/>
    </location>
</feature>
<feature type="active site" description="Nucleophile" evidence="1">
    <location>
        <position position="160"/>
    </location>
</feature>
<feature type="binding site" evidence="1">
    <location>
        <position position="22"/>
    </location>
    <ligand>
        <name>dUMP</name>
        <dbReference type="ChEBI" id="CHEBI:246422"/>
    </ligand>
</feature>
<feature type="binding site" evidence="1">
    <location>
        <begin position="180"/>
        <end position="183"/>
    </location>
    <ligand>
        <name>dUMP</name>
        <dbReference type="ChEBI" id="CHEBI:246422"/>
    </ligand>
</feature>
<feature type="binding site" evidence="1">
    <location>
        <position position="183"/>
    </location>
    <ligand>
        <name>(6R)-5,10-methylene-5,6,7,8-tetrahydrofolate</name>
        <dbReference type="ChEBI" id="CHEBI:15636"/>
    </ligand>
</feature>
<feature type="binding site" evidence="1">
    <location>
        <position position="191"/>
    </location>
    <ligand>
        <name>dUMP</name>
        <dbReference type="ChEBI" id="CHEBI:246422"/>
    </ligand>
</feature>
<feature type="binding site" evidence="1">
    <location>
        <begin position="221"/>
        <end position="223"/>
    </location>
    <ligand>
        <name>dUMP</name>
        <dbReference type="ChEBI" id="CHEBI:246422"/>
    </ligand>
</feature>
<feature type="binding site" evidence="1">
    <location>
        <position position="282"/>
    </location>
    <ligand>
        <name>(6R)-5,10-methylene-5,6,7,8-tetrahydrofolate</name>
        <dbReference type="ChEBI" id="CHEBI:15636"/>
    </ligand>
</feature>
<proteinExistence type="inferred from homology"/>
<gene>
    <name evidence="1" type="primary">thyA</name>
    <name type="ordered locus">VCM66_0633</name>
</gene>
<accession>C3LST0</accession>
<protein>
    <recommendedName>
        <fullName evidence="1">Thymidylate synthase</fullName>
        <shortName evidence="1">TS</shortName>
        <shortName evidence="1">TSase</shortName>
        <ecNumber evidence="1">2.1.1.45</ecNumber>
    </recommendedName>
</protein>
<comment type="function">
    <text evidence="1">Catalyzes the reductive methylation of 2'-deoxyuridine-5'-monophosphate (dUMP) to 2'-deoxythymidine-5'-monophosphate (dTMP) while utilizing 5,10-methylenetetrahydrofolate (mTHF) as the methyl donor and reductant in the reaction, yielding dihydrofolate (DHF) as a by-product. This enzymatic reaction provides an intracellular de novo source of dTMP, an essential precursor for DNA biosynthesis.</text>
</comment>
<comment type="catalytic activity">
    <reaction evidence="1">
        <text>dUMP + (6R)-5,10-methylene-5,6,7,8-tetrahydrofolate = 7,8-dihydrofolate + dTMP</text>
        <dbReference type="Rhea" id="RHEA:12104"/>
        <dbReference type="ChEBI" id="CHEBI:15636"/>
        <dbReference type="ChEBI" id="CHEBI:57451"/>
        <dbReference type="ChEBI" id="CHEBI:63528"/>
        <dbReference type="ChEBI" id="CHEBI:246422"/>
        <dbReference type="EC" id="2.1.1.45"/>
    </reaction>
</comment>
<comment type="pathway">
    <text evidence="1">Pyrimidine metabolism; dTTP biosynthesis.</text>
</comment>
<comment type="subunit">
    <text evidence="1">Homodimer.</text>
</comment>
<comment type="subcellular location">
    <subcellularLocation>
        <location evidence="1">Cytoplasm</location>
    </subcellularLocation>
</comment>
<comment type="similarity">
    <text evidence="1">Belongs to the thymidylate synthase family. Bacterial-type ThyA subfamily.</text>
</comment>
<reference key="1">
    <citation type="journal article" date="2008" name="PLoS ONE">
        <title>A recalibrated molecular clock and independent origins for the cholera pandemic clones.</title>
        <authorList>
            <person name="Feng L."/>
            <person name="Reeves P.R."/>
            <person name="Lan R."/>
            <person name="Ren Y."/>
            <person name="Gao C."/>
            <person name="Zhou Z."/>
            <person name="Ren Y."/>
            <person name="Cheng J."/>
            <person name="Wang W."/>
            <person name="Wang J."/>
            <person name="Qian W."/>
            <person name="Li D."/>
            <person name="Wang L."/>
        </authorList>
    </citation>
    <scope>NUCLEOTIDE SEQUENCE [LARGE SCALE GENOMIC DNA]</scope>
    <source>
        <strain>M66-2</strain>
    </source>
</reference>
<dbReference type="EC" id="2.1.1.45" evidence="1"/>
<dbReference type="EMBL" id="CP001233">
    <property type="protein sequence ID" value="ACP04956.1"/>
    <property type="molecule type" value="Genomic_DNA"/>
</dbReference>
<dbReference type="RefSeq" id="WP_001250353.1">
    <property type="nucleotide sequence ID" value="NC_012578.1"/>
</dbReference>
<dbReference type="SMR" id="C3LST0"/>
<dbReference type="KEGG" id="vcm:VCM66_0633"/>
<dbReference type="HOGENOM" id="CLU_021669_0_1_6"/>
<dbReference type="UniPathway" id="UPA00575"/>
<dbReference type="Proteomes" id="UP000001217">
    <property type="component" value="Chromosome I"/>
</dbReference>
<dbReference type="GO" id="GO:0005829">
    <property type="term" value="C:cytosol"/>
    <property type="evidence" value="ECO:0007669"/>
    <property type="project" value="TreeGrafter"/>
</dbReference>
<dbReference type="GO" id="GO:0004799">
    <property type="term" value="F:thymidylate synthase activity"/>
    <property type="evidence" value="ECO:0007669"/>
    <property type="project" value="UniProtKB-UniRule"/>
</dbReference>
<dbReference type="GO" id="GO:0006231">
    <property type="term" value="P:dTMP biosynthetic process"/>
    <property type="evidence" value="ECO:0007669"/>
    <property type="project" value="UniProtKB-UniRule"/>
</dbReference>
<dbReference type="GO" id="GO:0006235">
    <property type="term" value="P:dTTP biosynthetic process"/>
    <property type="evidence" value="ECO:0007669"/>
    <property type="project" value="UniProtKB-UniRule"/>
</dbReference>
<dbReference type="GO" id="GO:0032259">
    <property type="term" value="P:methylation"/>
    <property type="evidence" value="ECO:0007669"/>
    <property type="project" value="UniProtKB-KW"/>
</dbReference>
<dbReference type="CDD" id="cd00351">
    <property type="entry name" value="TS_Pyrimidine_HMase"/>
    <property type="match status" value="1"/>
</dbReference>
<dbReference type="FunFam" id="3.30.572.10:FF:000003">
    <property type="entry name" value="Thymidylate synthase"/>
    <property type="match status" value="1"/>
</dbReference>
<dbReference type="Gene3D" id="3.30.572.10">
    <property type="entry name" value="Thymidylate synthase/dCMP hydroxymethylase domain"/>
    <property type="match status" value="1"/>
</dbReference>
<dbReference type="HAMAP" id="MF_00008">
    <property type="entry name" value="Thymidy_synth_bact"/>
    <property type="match status" value="1"/>
</dbReference>
<dbReference type="InterPro" id="IPR045097">
    <property type="entry name" value="Thymidate_synth/dCMP_Mease"/>
</dbReference>
<dbReference type="InterPro" id="IPR023451">
    <property type="entry name" value="Thymidate_synth/dCMP_Mease_dom"/>
</dbReference>
<dbReference type="InterPro" id="IPR036926">
    <property type="entry name" value="Thymidate_synth/dCMP_Mease_sf"/>
</dbReference>
<dbReference type="InterPro" id="IPR000398">
    <property type="entry name" value="Thymidylate_synthase"/>
</dbReference>
<dbReference type="InterPro" id="IPR020940">
    <property type="entry name" value="Thymidylate_synthase_AS"/>
</dbReference>
<dbReference type="NCBIfam" id="NF002498">
    <property type="entry name" value="PRK01827.1-4"/>
    <property type="match status" value="1"/>
</dbReference>
<dbReference type="NCBIfam" id="TIGR03284">
    <property type="entry name" value="thym_sym"/>
    <property type="match status" value="1"/>
</dbReference>
<dbReference type="PANTHER" id="PTHR11548:SF9">
    <property type="entry name" value="THYMIDYLATE SYNTHASE"/>
    <property type="match status" value="1"/>
</dbReference>
<dbReference type="PANTHER" id="PTHR11548">
    <property type="entry name" value="THYMIDYLATE SYNTHASE 1"/>
    <property type="match status" value="1"/>
</dbReference>
<dbReference type="Pfam" id="PF00303">
    <property type="entry name" value="Thymidylat_synt"/>
    <property type="match status" value="1"/>
</dbReference>
<dbReference type="PRINTS" id="PR00108">
    <property type="entry name" value="THYMDSNTHASE"/>
</dbReference>
<dbReference type="SUPFAM" id="SSF55831">
    <property type="entry name" value="Thymidylate synthase/dCMP hydroxymethylase"/>
    <property type="match status" value="1"/>
</dbReference>
<dbReference type="PROSITE" id="PS00091">
    <property type="entry name" value="THYMIDYLATE_SYNTHASE"/>
    <property type="match status" value="1"/>
</dbReference>
<organism>
    <name type="scientific">Vibrio cholerae serotype O1 (strain M66-2)</name>
    <dbReference type="NCBI Taxonomy" id="579112"/>
    <lineage>
        <taxon>Bacteria</taxon>
        <taxon>Pseudomonadati</taxon>
        <taxon>Pseudomonadota</taxon>
        <taxon>Gammaproteobacteria</taxon>
        <taxon>Vibrionales</taxon>
        <taxon>Vibrionaceae</taxon>
        <taxon>Vibrio</taxon>
    </lineage>
</organism>
<keyword id="KW-0963">Cytoplasm</keyword>
<keyword id="KW-0489">Methyltransferase</keyword>
<keyword id="KW-0545">Nucleotide biosynthesis</keyword>
<keyword id="KW-0808">Transferase</keyword>
<sequence>MRQYLDLCQRIVDQGVWVENERTGKRCLTVINADLTYDVGNNQFPLVTTRKSFWKAAVAELLGYIRGYDNAADFRQLGTKTWDANANLNQAWLNNPYRKGEDDMGRVYGVQGRAWAKPDGGHIDQLKKIVDDLSRGVDDRGEILNFYNPGEFHMGCLRPCMYSHHFSLLGDTLYLNSTQRSCDVPLGLNFNMVQVYVFLALMAQITGKKPGLAYHKIVNAHIYQDQLELMRDVQLKREPFPAPQFHINPKIKTLQDLETWVTLDDFDVTGYQFHDPIQYPFSV</sequence>
<evidence type="ECO:0000255" key="1">
    <source>
        <dbReference type="HAMAP-Rule" id="MF_00008"/>
    </source>
</evidence>
<name>TYSY_VIBCM</name>